<reference key="1">
    <citation type="journal article" date="2002" name="Proc. Natl. Acad. Sci. U.S.A.">
        <title>Complete genome sequence and comparative genomic analysis of an emerging human pathogen, serotype V Streptococcus agalactiae.</title>
        <authorList>
            <person name="Tettelin H."/>
            <person name="Masignani V."/>
            <person name="Cieslewicz M.J."/>
            <person name="Eisen J.A."/>
            <person name="Peterson S.N."/>
            <person name="Wessels M.R."/>
            <person name="Paulsen I.T."/>
            <person name="Nelson K.E."/>
            <person name="Margarit I."/>
            <person name="Read T.D."/>
            <person name="Madoff L.C."/>
            <person name="Wolf A.M."/>
            <person name="Beanan M.J."/>
            <person name="Brinkac L.M."/>
            <person name="Daugherty S.C."/>
            <person name="DeBoy R.T."/>
            <person name="Durkin A.S."/>
            <person name="Kolonay J.F."/>
            <person name="Madupu R."/>
            <person name="Lewis M.R."/>
            <person name="Radune D."/>
            <person name="Fedorova N.B."/>
            <person name="Scanlan D."/>
            <person name="Khouri H.M."/>
            <person name="Mulligan S."/>
            <person name="Carty H.A."/>
            <person name="Cline R.T."/>
            <person name="Van Aken S.E."/>
            <person name="Gill J."/>
            <person name="Scarselli M."/>
            <person name="Mora M."/>
            <person name="Iacobini E.T."/>
            <person name="Brettoni C."/>
            <person name="Galli G."/>
            <person name="Mariani M."/>
            <person name="Vegni F."/>
            <person name="Maione D."/>
            <person name="Rinaudo D."/>
            <person name="Rappuoli R."/>
            <person name="Telford J.L."/>
            <person name="Kasper D.L."/>
            <person name="Grandi G."/>
            <person name="Fraser C.M."/>
        </authorList>
    </citation>
    <scope>NUCLEOTIDE SEQUENCE [LARGE SCALE GENOMIC DNA]</scope>
    <source>
        <strain>ATCC BAA-611 / 2603 V/R</strain>
    </source>
</reference>
<evidence type="ECO:0000255" key="1">
    <source>
        <dbReference type="HAMAP-Rule" id="MF_01445"/>
    </source>
</evidence>
<proteinExistence type="inferred from homology"/>
<dbReference type="EC" id="2.3.1.234" evidence="1"/>
<dbReference type="EMBL" id="AE009948">
    <property type="protein sequence ID" value="AAN00620.1"/>
    <property type="molecule type" value="Genomic_DNA"/>
</dbReference>
<dbReference type="RefSeq" id="NP_688747.1">
    <property type="nucleotide sequence ID" value="NC_004116.1"/>
</dbReference>
<dbReference type="RefSeq" id="WP_000655087.1">
    <property type="nucleotide sequence ID" value="NC_004116.1"/>
</dbReference>
<dbReference type="SMR" id="Q8DXT9"/>
<dbReference type="STRING" id="208435.SAG1757"/>
<dbReference type="GeneID" id="66886595"/>
<dbReference type="KEGG" id="sag:SAG1757"/>
<dbReference type="PATRIC" id="fig|208435.3.peg.1763"/>
<dbReference type="HOGENOM" id="CLU_023208_0_2_9"/>
<dbReference type="OrthoDB" id="9806197at2"/>
<dbReference type="Proteomes" id="UP000000821">
    <property type="component" value="Chromosome"/>
</dbReference>
<dbReference type="GO" id="GO:0005737">
    <property type="term" value="C:cytoplasm"/>
    <property type="evidence" value="ECO:0007669"/>
    <property type="project" value="UniProtKB-SubCell"/>
</dbReference>
<dbReference type="GO" id="GO:0005506">
    <property type="term" value="F:iron ion binding"/>
    <property type="evidence" value="ECO:0007669"/>
    <property type="project" value="UniProtKB-UniRule"/>
</dbReference>
<dbReference type="GO" id="GO:0061711">
    <property type="term" value="F:N(6)-L-threonylcarbamoyladenine synthase activity"/>
    <property type="evidence" value="ECO:0007669"/>
    <property type="project" value="UniProtKB-EC"/>
</dbReference>
<dbReference type="GO" id="GO:0002949">
    <property type="term" value="P:tRNA threonylcarbamoyladenosine modification"/>
    <property type="evidence" value="ECO:0007669"/>
    <property type="project" value="UniProtKB-UniRule"/>
</dbReference>
<dbReference type="CDD" id="cd24133">
    <property type="entry name" value="ASKHA_NBD_TsaD_bac"/>
    <property type="match status" value="1"/>
</dbReference>
<dbReference type="FunFam" id="3.30.420.40:FF:000012">
    <property type="entry name" value="tRNA N6-adenosine threonylcarbamoyltransferase"/>
    <property type="match status" value="1"/>
</dbReference>
<dbReference type="FunFam" id="3.30.420.40:FF:000040">
    <property type="entry name" value="tRNA N6-adenosine threonylcarbamoyltransferase"/>
    <property type="match status" value="1"/>
</dbReference>
<dbReference type="Gene3D" id="3.30.420.40">
    <property type="match status" value="2"/>
</dbReference>
<dbReference type="HAMAP" id="MF_01445">
    <property type="entry name" value="TsaD"/>
    <property type="match status" value="1"/>
</dbReference>
<dbReference type="InterPro" id="IPR043129">
    <property type="entry name" value="ATPase_NBD"/>
</dbReference>
<dbReference type="InterPro" id="IPR000905">
    <property type="entry name" value="Gcp-like_dom"/>
</dbReference>
<dbReference type="InterPro" id="IPR017861">
    <property type="entry name" value="KAE1/TsaD"/>
</dbReference>
<dbReference type="InterPro" id="IPR022450">
    <property type="entry name" value="TsaD"/>
</dbReference>
<dbReference type="NCBIfam" id="TIGR00329">
    <property type="entry name" value="gcp_kae1"/>
    <property type="match status" value="1"/>
</dbReference>
<dbReference type="NCBIfam" id="TIGR03723">
    <property type="entry name" value="T6A_TsaD_YgjD"/>
    <property type="match status" value="1"/>
</dbReference>
<dbReference type="PANTHER" id="PTHR11735">
    <property type="entry name" value="TRNA N6-ADENOSINE THREONYLCARBAMOYLTRANSFERASE"/>
    <property type="match status" value="1"/>
</dbReference>
<dbReference type="PANTHER" id="PTHR11735:SF6">
    <property type="entry name" value="TRNA N6-ADENOSINE THREONYLCARBAMOYLTRANSFERASE, MITOCHONDRIAL"/>
    <property type="match status" value="1"/>
</dbReference>
<dbReference type="Pfam" id="PF00814">
    <property type="entry name" value="TsaD"/>
    <property type="match status" value="1"/>
</dbReference>
<dbReference type="PRINTS" id="PR00789">
    <property type="entry name" value="OSIALOPTASE"/>
</dbReference>
<dbReference type="SUPFAM" id="SSF53067">
    <property type="entry name" value="Actin-like ATPase domain"/>
    <property type="match status" value="1"/>
</dbReference>
<sequence length="336" mass="36139">MKDRYILAVESSCDETSVAILKNDKELLANIIASQVESHKRFGGVVPEVASRHHVEVVTTCFEDALQEAGIVASDLDAVAVTYGPGLVGALLVGMAAAKAFAWANKLPLIPINHMAGHLMAARDVKELQYPLLALLVSGGHTELVYVSEPGDYKIVGETRDDAVGEAYDKVGRVMGLTYPAGREIDQLAHKGQDTYHFPRAMIKEDHLEFSFSGLKSAFINLHHNAEQKGEALVLEDLCASFQAAVLDILLAKTQKALLKYPVKTLVVAGGVAANQGLRERLATDISPDIDVVIPPLRLCGDNAGMIALAAAIEFEKENFASLKLNAKPSLAFESL</sequence>
<name>TSAD_STRA5</name>
<accession>Q8DXT9</accession>
<comment type="function">
    <text evidence="1">Required for the formation of a threonylcarbamoyl group on adenosine at position 37 (t(6)A37) in tRNAs that read codons beginning with adenine. Is involved in the transfer of the threonylcarbamoyl moiety of threonylcarbamoyl-AMP (TC-AMP) to the N6 group of A37, together with TsaE and TsaB. TsaD likely plays a direct catalytic role in this reaction.</text>
</comment>
<comment type="catalytic activity">
    <reaction evidence="1">
        <text>L-threonylcarbamoyladenylate + adenosine(37) in tRNA = N(6)-L-threonylcarbamoyladenosine(37) in tRNA + AMP + H(+)</text>
        <dbReference type="Rhea" id="RHEA:37059"/>
        <dbReference type="Rhea" id="RHEA-COMP:10162"/>
        <dbReference type="Rhea" id="RHEA-COMP:10163"/>
        <dbReference type="ChEBI" id="CHEBI:15378"/>
        <dbReference type="ChEBI" id="CHEBI:73682"/>
        <dbReference type="ChEBI" id="CHEBI:74411"/>
        <dbReference type="ChEBI" id="CHEBI:74418"/>
        <dbReference type="ChEBI" id="CHEBI:456215"/>
        <dbReference type="EC" id="2.3.1.234"/>
    </reaction>
</comment>
<comment type="cofactor">
    <cofactor evidence="1">
        <name>Fe(2+)</name>
        <dbReference type="ChEBI" id="CHEBI:29033"/>
    </cofactor>
    <text evidence="1">Binds 1 Fe(2+) ion per subunit.</text>
</comment>
<comment type="subcellular location">
    <subcellularLocation>
        <location evidence="1">Cytoplasm</location>
    </subcellularLocation>
</comment>
<comment type="similarity">
    <text evidence="1">Belongs to the KAE1 / TsaD family.</text>
</comment>
<protein>
    <recommendedName>
        <fullName evidence="1">tRNA N6-adenosine threonylcarbamoyltransferase</fullName>
        <ecNumber evidence="1">2.3.1.234</ecNumber>
    </recommendedName>
    <alternativeName>
        <fullName evidence="1">N6-L-threonylcarbamoyladenine synthase</fullName>
        <shortName evidence="1">t(6)A synthase</shortName>
    </alternativeName>
    <alternativeName>
        <fullName evidence="1">t(6)A37 threonylcarbamoyladenosine biosynthesis protein TsaD</fullName>
    </alternativeName>
    <alternativeName>
        <fullName evidence="1">tRNA threonylcarbamoyladenosine biosynthesis protein TsaD</fullName>
    </alternativeName>
</protein>
<gene>
    <name evidence="1" type="primary">tsaD</name>
    <name type="synonym">gcp</name>
    <name type="ordered locus">SAG1757</name>
</gene>
<keyword id="KW-0012">Acyltransferase</keyword>
<keyword id="KW-0963">Cytoplasm</keyword>
<keyword id="KW-0408">Iron</keyword>
<keyword id="KW-0479">Metal-binding</keyword>
<keyword id="KW-1185">Reference proteome</keyword>
<keyword id="KW-0808">Transferase</keyword>
<keyword id="KW-0819">tRNA processing</keyword>
<feature type="chain" id="PRO_0000303559" description="tRNA N6-adenosine threonylcarbamoyltransferase">
    <location>
        <begin position="1"/>
        <end position="336"/>
    </location>
</feature>
<feature type="binding site" evidence="1">
    <location>
        <position position="114"/>
    </location>
    <ligand>
        <name>Fe cation</name>
        <dbReference type="ChEBI" id="CHEBI:24875"/>
    </ligand>
</feature>
<feature type="binding site" evidence="1">
    <location>
        <position position="118"/>
    </location>
    <ligand>
        <name>Fe cation</name>
        <dbReference type="ChEBI" id="CHEBI:24875"/>
    </ligand>
</feature>
<feature type="binding site" evidence="1">
    <location>
        <begin position="136"/>
        <end position="140"/>
    </location>
    <ligand>
        <name>substrate</name>
    </ligand>
</feature>
<feature type="binding site" evidence="1">
    <location>
        <position position="169"/>
    </location>
    <ligand>
        <name>substrate</name>
    </ligand>
</feature>
<feature type="binding site" evidence="1">
    <location>
        <position position="182"/>
    </location>
    <ligand>
        <name>substrate</name>
    </ligand>
</feature>
<feature type="binding site" evidence="1">
    <location>
        <position position="186"/>
    </location>
    <ligand>
        <name>substrate</name>
    </ligand>
</feature>
<feature type="binding site" evidence="1">
    <location>
        <position position="275"/>
    </location>
    <ligand>
        <name>substrate</name>
    </ligand>
</feature>
<feature type="binding site" evidence="1">
    <location>
        <position position="302"/>
    </location>
    <ligand>
        <name>Fe cation</name>
        <dbReference type="ChEBI" id="CHEBI:24875"/>
    </ligand>
</feature>
<organism>
    <name type="scientific">Streptococcus agalactiae serotype V (strain ATCC BAA-611 / 2603 V/R)</name>
    <dbReference type="NCBI Taxonomy" id="208435"/>
    <lineage>
        <taxon>Bacteria</taxon>
        <taxon>Bacillati</taxon>
        <taxon>Bacillota</taxon>
        <taxon>Bacilli</taxon>
        <taxon>Lactobacillales</taxon>
        <taxon>Streptococcaceae</taxon>
        <taxon>Streptococcus</taxon>
    </lineage>
</organism>